<sequence length="257" mass="28849">MAKKNKPTECPAGEKWAVPYADFLSLLLALFIALYAISAVNKSKVEALKTEFIKIFNYAPKPEAMQPVVVIPPDSGKEEEQMASESSKPASQNTETKATIARKGEGSVLEQIDQGSILKLPSNLLFENATSDAINQDMMLYIERIAKIIQKLPKRVHINVRGFTDDTPLVKTRFKSHYELAANRAYRVMKVLIQYGVNPNQLSFSSYGSTNPIAPNDSLENRMKNNRVEIFFSTDANDLSKIHSILDNEFNPHKQQE</sequence>
<dbReference type="EMBL" id="AE000511">
    <property type="protein sequence ID" value="AAD07865.1"/>
    <property type="molecule type" value="Genomic_DNA"/>
</dbReference>
<dbReference type="PIR" id="H64621">
    <property type="entry name" value="H64621"/>
</dbReference>
<dbReference type="RefSeq" id="NP_207609.1">
    <property type="nucleotide sequence ID" value="NC_000915.1"/>
</dbReference>
<dbReference type="PDB" id="3CYP">
    <property type="method" value="X-ray"/>
    <property type="resolution" value="1.60 A"/>
    <property type="chains" value="B/C/D/E=126-257"/>
</dbReference>
<dbReference type="PDB" id="3CYQ">
    <property type="method" value="X-ray"/>
    <property type="resolution" value="2.30 A"/>
    <property type="chains" value="A/B/C/D/E/F/G/H/I/J/K/L/M/N/O/P=126-257"/>
</dbReference>
<dbReference type="PDB" id="3IMP">
    <property type="method" value="X-ray"/>
    <property type="resolution" value="2.50 A"/>
    <property type="chains" value="A/B/C/D/E/F/G/H/I/J/K/L=126-257"/>
</dbReference>
<dbReference type="PDB" id="3S02">
    <property type="method" value="X-ray"/>
    <property type="resolution" value="2.50 A"/>
    <property type="chains" value="A/B=104-257"/>
</dbReference>
<dbReference type="PDB" id="3S03">
    <property type="method" value="X-ray"/>
    <property type="resolution" value="2.50 A"/>
    <property type="chains" value="A/B/C/D=98-257"/>
</dbReference>
<dbReference type="PDB" id="3S06">
    <property type="method" value="X-ray"/>
    <property type="resolution" value="1.80 A"/>
    <property type="chains" value="A/B=98-257"/>
</dbReference>
<dbReference type="PDB" id="3S0H">
    <property type="method" value="X-ray"/>
    <property type="resolution" value="2.10 A"/>
    <property type="chains" value="A/B/C/D=91-257"/>
</dbReference>
<dbReference type="PDB" id="3S0W">
    <property type="method" value="X-ray"/>
    <property type="resolution" value="2.50 A"/>
    <property type="chains" value="A/B=79-257"/>
</dbReference>
<dbReference type="PDB" id="3S0Y">
    <property type="method" value="X-ray"/>
    <property type="resolution" value="1.80 A"/>
    <property type="chains" value="A/B=65-257"/>
</dbReference>
<dbReference type="PDBsum" id="3CYP"/>
<dbReference type="PDBsum" id="3CYQ"/>
<dbReference type="PDBsum" id="3IMP"/>
<dbReference type="PDBsum" id="3S02"/>
<dbReference type="PDBsum" id="3S03"/>
<dbReference type="PDBsum" id="3S06"/>
<dbReference type="PDBsum" id="3S0H"/>
<dbReference type="PDBsum" id="3S0W"/>
<dbReference type="PDBsum" id="3S0Y"/>
<dbReference type="SMR" id="P56427"/>
<dbReference type="DIP" id="DIP-3662N"/>
<dbReference type="IntAct" id="P56427">
    <property type="interactions" value="4"/>
</dbReference>
<dbReference type="MINT" id="P56427"/>
<dbReference type="STRING" id="85962.HP_0816"/>
<dbReference type="PaxDb" id="85962-C694_04180"/>
<dbReference type="EnsemblBacteria" id="AAD07865">
    <property type="protein sequence ID" value="AAD07865"/>
    <property type="gene ID" value="HP_0816"/>
</dbReference>
<dbReference type="KEGG" id="hpy:HP_0816"/>
<dbReference type="PATRIC" id="fig|85962.8.peg.848"/>
<dbReference type="eggNOG" id="COG1360">
    <property type="taxonomic scope" value="Bacteria"/>
</dbReference>
<dbReference type="InParanoid" id="P56427"/>
<dbReference type="OrthoDB" id="5292153at2"/>
<dbReference type="PhylomeDB" id="P56427"/>
<dbReference type="EvolutionaryTrace" id="P56427"/>
<dbReference type="Proteomes" id="UP000000429">
    <property type="component" value="Chromosome"/>
</dbReference>
<dbReference type="GO" id="GO:0120101">
    <property type="term" value="C:bacterial-type flagellum stator complex"/>
    <property type="evidence" value="ECO:0000318"/>
    <property type="project" value="GO_Central"/>
</dbReference>
<dbReference type="GO" id="GO:0042802">
    <property type="term" value="F:identical protein binding"/>
    <property type="evidence" value="ECO:0000353"/>
    <property type="project" value="IntAct"/>
</dbReference>
<dbReference type="GO" id="GO:0071973">
    <property type="term" value="P:bacterial-type flagellum-dependent cell motility"/>
    <property type="evidence" value="ECO:0000318"/>
    <property type="project" value="GO_Central"/>
</dbReference>
<dbReference type="GO" id="GO:0006935">
    <property type="term" value="P:chemotaxis"/>
    <property type="evidence" value="ECO:0007669"/>
    <property type="project" value="UniProtKB-KW"/>
</dbReference>
<dbReference type="CDD" id="cd07185">
    <property type="entry name" value="OmpA_C-like"/>
    <property type="match status" value="1"/>
</dbReference>
<dbReference type="FunFam" id="3.30.1330.60:FF:000007">
    <property type="entry name" value="Flagellar motor protein MotB"/>
    <property type="match status" value="1"/>
</dbReference>
<dbReference type="Gene3D" id="3.30.1330.60">
    <property type="entry name" value="OmpA-like domain"/>
    <property type="match status" value="1"/>
</dbReference>
<dbReference type="InterPro" id="IPR050330">
    <property type="entry name" value="Bact_OuterMem_StrucFunc"/>
</dbReference>
<dbReference type="InterPro" id="IPR025713">
    <property type="entry name" value="MotB-like_N_dom"/>
</dbReference>
<dbReference type="InterPro" id="IPR006665">
    <property type="entry name" value="OmpA-like"/>
</dbReference>
<dbReference type="InterPro" id="IPR036737">
    <property type="entry name" value="OmpA-like_sf"/>
</dbReference>
<dbReference type="NCBIfam" id="NF006285">
    <property type="entry name" value="PRK08457.1"/>
    <property type="match status" value="1"/>
</dbReference>
<dbReference type="PANTHER" id="PTHR30329:SF21">
    <property type="entry name" value="LIPOPROTEIN YIAD-RELATED"/>
    <property type="match status" value="1"/>
</dbReference>
<dbReference type="PANTHER" id="PTHR30329">
    <property type="entry name" value="STATOR ELEMENT OF FLAGELLAR MOTOR COMPLEX"/>
    <property type="match status" value="1"/>
</dbReference>
<dbReference type="Pfam" id="PF13677">
    <property type="entry name" value="MotB_plug"/>
    <property type="match status" value="1"/>
</dbReference>
<dbReference type="Pfam" id="PF00691">
    <property type="entry name" value="OmpA"/>
    <property type="match status" value="1"/>
</dbReference>
<dbReference type="SUPFAM" id="SSF103088">
    <property type="entry name" value="OmpA-like"/>
    <property type="match status" value="1"/>
</dbReference>
<dbReference type="PROSITE" id="PS51123">
    <property type="entry name" value="OMPA_2"/>
    <property type="match status" value="1"/>
</dbReference>
<gene>
    <name type="primary">motB</name>
    <name type="ordered locus">HP_0816</name>
</gene>
<accession>P56427</accession>
<proteinExistence type="evidence at protein level"/>
<name>MOTB_HELPY</name>
<organism>
    <name type="scientific">Helicobacter pylori (strain ATCC 700392 / 26695)</name>
    <name type="common">Campylobacter pylori</name>
    <dbReference type="NCBI Taxonomy" id="85962"/>
    <lineage>
        <taxon>Bacteria</taxon>
        <taxon>Pseudomonadati</taxon>
        <taxon>Campylobacterota</taxon>
        <taxon>Epsilonproteobacteria</taxon>
        <taxon>Campylobacterales</taxon>
        <taxon>Helicobacteraceae</taxon>
        <taxon>Helicobacter</taxon>
    </lineage>
</organism>
<feature type="chain" id="PRO_0000189588" description="Motility protein B">
    <location>
        <begin position="1"/>
        <end position="257"/>
    </location>
</feature>
<feature type="topological domain" description="Cytoplasmic" evidence="2">
    <location>
        <begin position="1"/>
        <end position="16"/>
    </location>
</feature>
<feature type="transmembrane region" description="Helical" evidence="2">
    <location>
        <begin position="17"/>
        <end position="37"/>
    </location>
</feature>
<feature type="topological domain" description="Periplasmic" evidence="2">
    <location>
        <begin position="38"/>
        <end position="257"/>
    </location>
</feature>
<feature type="domain" description="OmpA-like" evidence="3">
    <location>
        <begin position="113"/>
        <end position="236"/>
    </location>
</feature>
<feature type="region of interest" description="Disordered" evidence="4">
    <location>
        <begin position="74"/>
        <end position="100"/>
    </location>
</feature>
<feature type="compositionally biased region" description="Polar residues" evidence="4">
    <location>
        <begin position="83"/>
        <end position="97"/>
    </location>
</feature>
<feature type="helix" evidence="9">
    <location>
        <begin position="77"/>
        <end position="83"/>
    </location>
</feature>
<feature type="strand" evidence="9">
    <location>
        <begin position="95"/>
        <end position="100"/>
    </location>
</feature>
<feature type="turn" evidence="9">
    <location>
        <begin position="101"/>
        <end position="103"/>
    </location>
</feature>
<feature type="strand" evidence="7">
    <location>
        <begin position="108"/>
        <end position="112"/>
    </location>
</feature>
<feature type="strand" evidence="7">
    <location>
        <begin position="115"/>
        <end position="120"/>
    </location>
</feature>
<feature type="helix" evidence="7">
    <location>
        <begin position="122"/>
        <end position="124"/>
    </location>
</feature>
<feature type="strand" evidence="9">
    <location>
        <begin position="126"/>
        <end position="128"/>
    </location>
</feature>
<feature type="strand" evidence="7">
    <location>
        <begin position="129"/>
        <end position="131"/>
    </location>
</feature>
<feature type="helix" evidence="6">
    <location>
        <begin position="136"/>
        <end position="149"/>
    </location>
</feature>
<feature type="strand" evidence="6">
    <location>
        <begin position="157"/>
        <end position="163"/>
    </location>
</feature>
<feature type="strand" evidence="6">
    <location>
        <begin position="171"/>
        <end position="173"/>
    </location>
</feature>
<feature type="helix" evidence="6">
    <location>
        <begin position="177"/>
        <end position="194"/>
    </location>
</feature>
<feature type="helix" evidence="6">
    <location>
        <begin position="199"/>
        <end position="201"/>
    </location>
</feature>
<feature type="strand" evidence="6">
    <location>
        <begin position="202"/>
        <end position="206"/>
    </location>
</feature>
<feature type="strand" evidence="8">
    <location>
        <begin position="216"/>
        <end position="218"/>
    </location>
</feature>
<feature type="helix" evidence="6">
    <location>
        <begin position="219"/>
        <end position="225"/>
    </location>
</feature>
<feature type="strand" evidence="6">
    <location>
        <begin position="226"/>
        <end position="235"/>
    </location>
</feature>
<feature type="helix" evidence="6">
    <location>
        <begin position="236"/>
        <end position="250"/>
    </location>
</feature>
<comment type="function">
    <text evidence="1">MotA and MotB comprise the stator element of the flagellar motor complex. Required for the rotation of the flagellar motor. Might be a linker that fastens the torque-generating machinery to the cell wall (By similarity).</text>
</comment>
<comment type="subunit">
    <text evidence="1">Each stator complex is composed of 4 MotA and 2 MotB subunits. 2 A subunits and 1 B subunit are thought to form a single ion channel, so that each stator complex contains two channels (By similarity).</text>
</comment>
<comment type="interaction">
    <interactant intactId="EBI-7611014">
        <id>P56427</id>
    </interactant>
    <interactant intactId="EBI-7611014">
        <id>P56427</id>
        <label>motB</label>
    </interactant>
    <organismsDiffer>false</organismsDiffer>
    <experiments>3</experiments>
</comment>
<comment type="subcellular location">
    <subcellularLocation>
        <location evidence="1">Cell inner membrane</location>
        <topology evidence="5">Single-pass type II membrane protein</topology>
    </subcellularLocation>
</comment>
<comment type="similarity">
    <text evidence="5">Belongs to the MotB family.</text>
</comment>
<protein>
    <recommendedName>
        <fullName>Motility protein B</fullName>
    </recommendedName>
    <alternativeName>
        <fullName>Chemotaxis protein MotB</fullName>
    </alternativeName>
</protein>
<keyword id="KW-0002">3D-structure</keyword>
<keyword id="KW-0997">Cell inner membrane</keyword>
<keyword id="KW-1003">Cell membrane</keyword>
<keyword id="KW-0145">Chemotaxis</keyword>
<keyword id="KW-0283">Flagellar rotation</keyword>
<keyword id="KW-0472">Membrane</keyword>
<keyword id="KW-1185">Reference proteome</keyword>
<keyword id="KW-0812">Transmembrane</keyword>
<keyword id="KW-1133">Transmembrane helix</keyword>
<evidence type="ECO:0000250" key="1"/>
<evidence type="ECO:0000255" key="2"/>
<evidence type="ECO:0000255" key="3">
    <source>
        <dbReference type="PROSITE-ProRule" id="PRU00473"/>
    </source>
</evidence>
<evidence type="ECO:0000256" key="4">
    <source>
        <dbReference type="SAM" id="MobiDB-lite"/>
    </source>
</evidence>
<evidence type="ECO:0000305" key="5"/>
<evidence type="ECO:0007829" key="6">
    <source>
        <dbReference type="PDB" id="3CYP"/>
    </source>
</evidence>
<evidence type="ECO:0007829" key="7">
    <source>
        <dbReference type="PDB" id="3S06"/>
    </source>
</evidence>
<evidence type="ECO:0007829" key="8">
    <source>
        <dbReference type="PDB" id="3S0H"/>
    </source>
</evidence>
<evidence type="ECO:0007829" key="9">
    <source>
        <dbReference type="PDB" id="3S0Y"/>
    </source>
</evidence>
<reference key="1">
    <citation type="journal article" date="1997" name="Nature">
        <title>The complete genome sequence of the gastric pathogen Helicobacter pylori.</title>
        <authorList>
            <person name="Tomb J.-F."/>
            <person name="White O."/>
            <person name="Kerlavage A.R."/>
            <person name="Clayton R.A."/>
            <person name="Sutton G.G."/>
            <person name="Fleischmann R.D."/>
            <person name="Ketchum K.A."/>
            <person name="Klenk H.-P."/>
            <person name="Gill S.R."/>
            <person name="Dougherty B.A."/>
            <person name="Nelson K.E."/>
            <person name="Quackenbush J."/>
            <person name="Zhou L."/>
            <person name="Kirkness E.F."/>
            <person name="Peterson S.N."/>
            <person name="Loftus B.J."/>
            <person name="Richardson D.L."/>
            <person name="Dodson R.J."/>
            <person name="Khalak H.G."/>
            <person name="Glodek A."/>
            <person name="McKenney K."/>
            <person name="FitzGerald L.M."/>
            <person name="Lee N."/>
            <person name="Adams M.D."/>
            <person name="Hickey E.K."/>
            <person name="Berg D.E."/>
            <person name="Gocayne J.D."/>
            <person name="Utterback T.R."/>
            <person name="Peterson J.D."/>
            <person name="Kelley J.M."/>
            <person name="Cotton M.D."/>
            <person name="Weidman J.F."/>
            <person name="Fujii C."/>
            <person name="Bowman C."/>
            <person name="Watthey L."/>
            <person name="Wallin E."/>
            <person name="Hayes W.S."/>
            <person name="Borodovsky M."/>
            <person name="Karp P.D."/>
            <person name="Smith H.O."/>
            <person name="Fraser C.M."/>
            <person name="Venter J.C."/>
        </authorList>
    </citation>
    <scope>NUCLEOTIDE SEQUENCE [LARGE SCALE GENOMIC DNA]</scope>
    <source>
        <strain>ATCC 700392 / 26695</strain>
    </source>
</reference>